<protein>
    <recommendedName>
        <fullName>Glutathione S-transferase U13</fullName>
        <shortName>AtGSTU13</shortName>
        <ecNumber>2.5.1.18</ecNumber>
    </recommendedName>
    <alternativeName>
        <fullName>GST class-tau member 13</fullName>
    </alternativeName>
    <alternativeName>
        <fullName>Glutathione S-transferase 12</fullName>
    </alternativeName>
</protein>
<evidence type="ECO:0000250" key="1"/>
<evidence type="ECO:0000250" key="2">
    <source>
        <dbReference type="UniProtKB" id="Q9ZW27"/>
    </source>
</evidence>
<evidence type="ECO:0000269" key="3">
    <source>
    </source>
</evidence>
<evidence type="ECO:0000305" key="4"/>
<accession>Q9FUS6</accession>
<accession>Q8LBX2</accession>
<accession>Q9LFX4</accession>
<feature type="chain" id="PRO_0000413559" description="Glutathione S-transferase U13">
    <location>
        <begin position="1"/>
        <end position="227"/>
    </location>
</feature>
<feature type="domain" description="GST N-terminal">
    <location>
        <begin position="5"/>
        <end position="86"/>
    </location>
</feature>
<feature type="domain" description="GST C-terminal">
    <location>
        <begin position="92"/>
        <end position="224"/>
    </location>
</feature>
<feature type="binding site" evidence="1">
    <location>
        <begin position="15"/>
        <end position="16"/>
    </location>
    <ligand>
        <name>glutathione</name>
        <dbReference type="ChEBI" id="CHEBI:57925"/>
    </ligand>
</feature>
<feature type="binding site" evidence="1">
    <location>
        <begin position="43"/>
        <end position="44"/>
    </location>
    <ligand>
        <name>glutathione</name>
        <dbReference type="ChEBI" id="CHEBI:57925"/>
    </ligand>
</feature>
<feature type="binding site" evidence="1">
    <location>
        <begin position="57"/>
        <end position="58"/>
    </location>
    <ligand>
        <name>glutathione</name>
        <dbReference type="ChEBI" id="CHEBI:57925"/>
    </ligand>
</feature>
<feature type="binding site" evidence="1">
    <location>
        <begin position="70"/>
        <end position="71"/>
    </location>
    <ligand>
        <name>glutathione</name>
        <dbReference type="ChEBI" id="CHEBI:57925"/>
    </ligand>
</feature>
<feature type="modified residue" description="Phosphothreonine" evidence="2">
    <location>
        <position position="158"/>
    </location>
</feature>
<feature type="sequence conflict" description="In Ref. 5; AAM64510." evidence="4" ref="5">
    <original>N</original>
    <variation>K</variation>
    <location>
        <position position="4"/>
    </location>
</feature>
<feature type="sequence conflict" description="In Ref. 5; AAM64510." evidence="4" ref="5">
    <original>S</original>
    <variation>C</variation>
    <location>
        <position position="69"/>
    </location>
</feature>
<feature type="sequence conflict" description="In Ref. 5; AAM64510." evidence="4" ref="5">
    <original>V</original>
    <variation>A</variation>
    <location>
        <position position="130"/>
    </location>
</feature>
<feature type="sequence conflict" description="In Ref. 5; AAM64510." evidence="4" ref="5">
    <original>E</original>
    <variation>D</variation>
    <location>
        <position position="142"/>
    </location>
</feature>
<feature type="sequence conflict" description="In Ref. 5; AAM64510." evidence="4" ref="5">
    <original>S</original>
    <variation>T</variation>
    <location>
        <position position="147"/>
    </location>
</feature>
<feature type="sequence conflict" description="In Ref. 5; AAM64510." evidence="4" ref="5">
    <original>Q</original>
    <variation>L</variation>
    <location>
        <position position="187"/>
    </location>
</feature>
<feature type="sequence conflict" description="In Ref. 5; AAM64510." evidence="4" ref="5">
    <original>R</original>
    <variation>S</variation>
    <location>
        <position position="199"/>
    </location>
</feature>
<feature type="sequence conflict" description="In Ref. 5; AAM64510." evidence="4" ref="5">
    <original>T</original>
    <variation>S</variation>
    <location>
        <position position="212"/>
    </location>
</feature>
<organism>
    <name type="scientific">Arabidopsis thaliana</name>
    <name type="common">Mouse-ear cress</name>
    <dbReference type="NCBI Taxonomy" id="3702"/>
    <lineage>
        <taxon>Eukaryota</taxon>
        <taxon>Viridiplantae</taxon>
        <taxon>Streptophyta</taxon>
        <taxon>Embryophyta</taxon>
        <taxon>Tracheophyta</taxon>
        <taxon>Spermatophyta</taxon>
        <taxon>Magnoliopsida</taxon>
        <taxon>eudicotyledons</taxon>
        <taxon>Gunneridae</taxon>
        <taxon>Pentapetalae</taxon>
        <taxon>rosids</taxon>
        <taxon>malvids</taxon>
        <taxon>Brassicales</taxon>
        <taxon>Brassicaceae</taxon>
        <taxon>Camelineae</taxon>
        <taxon>Arabidopsis</taxon>
    </lineage>
</organism>
<proteinExistence type="evidence at transcript level"/>
<reference key="1">
    <citation type="journal article" date="2002" name="Plant Mol. Biol.">
        <title>Probing the diversity of the Arabidopsis glutathione S-transferase gene family.</title>
        <authorList>
            <person name="Wagner U."/>
            <person name="Edwards R."/>
            <person name="Dixon D.P."/>
            <person name="Mauch F."/>
        </authorList>
    </citation>
    <scope>NUCLEOTIDE SEQUENCE [MRNA]</scope>
    <scope>FUNCTION</scope>
    <scope>INDUCTION</scope>
    <scope>GENE FAMILY</scope>
    <scope>NOMENCLATURE</scope>
    <source>
        <strain>cv. Columbia</strain>
    </source>
</reference>
<reference key="2">
    <citation type="journal article" date="2000" name="Nature">
        <title>Sequence and analysis of chromosome 1 of the plant Arabidopsis thaliana.</title>
        <authorList>
            <person name="Theologis A."/>
            <person name="Ecker J.R."/>
            <person name="Palm C.J."/>
            <person name="Federspiel N.A."/>
            <person name="Kaul S."/>
            <person name="White O."/>
            <person name="Alonso J."/>
            <person name="Altafi H."/>
            <person name="Araujo R."/>
            <person name="Bowman C.L."/>
            <person name="Brooks S.Y."/>
            <person name="Buehler E."/>
            <person name="Chan A."/>
            <person name="Chao Q."/>
            <person name="Chen H."/>
            <person name="Cheuk R.F."/>
            <person name="Chin C.W."/>
            <person name="Chung M.K."/>
            <person name="Conn L."/>
            <person name="Conway A.B."/>
            <person name="Conway A.R."/>
            <person name="Creasy T.H."/>
            <person name="Dewar K."/>
            <person name="Dunn P."/>
            <person name="Etgu P."/>
            <person name="Feldblyum T.V."/>
            <person name="Feng J.-D."/>
            <person name="Fong B."/>
            <person name="Fujii C.Y."/>
            <person name="Gill J.E."/>
            <person name="Goldsmith A.D."/>
            <person name="Haas B."/>
            <person name="Hansen N.F."/>
            <person name="Hughes B."/>
            <person name="Huizar L."/>
            <person name="Hunter J.L."/>
            <person name="Jenkins J."/>
            <person name="Johnson-Hopson C."/>
            <person name="Khan S."/>
            <person name="Khaykin E."/>
            <person name="Kim C.J."/>
            <person name="Koo H.L."/>
            <person name="Kremenetskaia I."/>
            <person name="Kurtz D.B."/>
            <person name="Kwan A."/>
            <person name="Lam B."/>
            <person name="Langin-Hooper S."/>
            <person name="Lee A."/>
            <person name="Lee J.M."/>
            <person name="Lenz C.A."/>
            <person name="Li J.H."/>
            <person name="Li Y.-P."/>
            <person name="Lin X."/>
            <person name="Liu S.X."/>
            <person name="Liu Z.A."/>
            <person name="Luros J.S."/>
            <person name="Maiti R."/>
            <person name="Marziali A."/>
            <person name="Militscher J."/>
            <person name="Miranda M."/>
            <person name="Nguyen M."/>
            <person name="Nierman W.C."/>
            <person name="Osborne B.I."/>
            <person name="Pai G."/>
            <person name="Peterson J."/>
            <person name="Pham P.K."/>
            <person name="Rizzo M."/>
            <person name="Rooney T."/>
            <person name="Rowley D."/>
            <person name="Sakano H."/>
            <person name="Salzberg S.L."/>
            <person name="Schwartz J.R."/>
            <person name="Shinn P."/>
            <person name="Southwick A.M."/>
            <person name="Sun H."/>
            <person name="Tallon L.J."/>
            <person name="Tambunga G."/>
            <person name="Toriumi M.J."/>
            <person name="Town C.D."/>
            <person name="Utterback T."/>
            <person name="Van Aken S."/>
            <person name="Vaysberg M."/>
            <person name="Vysotskaia V.S."/>
            <person name="Walker M."/>
            <person name="Wu D."/>
            <person name="Yu G."/>
            <person name="Fraser C.M."/>
            <person name="Venter J.C."/>
            <person name="Davis R.W."/>
        </authorList>
    </citation>
    <scope>NUCLEOTIDE SEQUENCE [LARGE SCALE GENOMIC DNA]</scope>
    <source>
        <strain>cv. Columbia</strain>
    </source>
</reference>
<reference key="3">
    <citation type="journal article" date="2017" name="Plant J.">
        <title>Araport11: a complete reannotation of the Arabidopsis thaliana reference genome.</title>
        <authorList>
            <person name="Cheng C.Y."/>
            <person name="Krishnakumar V."/>
            <person name="Chan A.P."/>
            <person name="Thibaud-Nissen F."/>
            <person name="Schobel S."/>
            <person name="Town C.D."/>
        </authorList>
    </citation>
    <scope>GENOME REANNOTATION</scope>
    <source>
        <strain>cv. Columbia</strain>
    </source>
</reference>
<reference key="4">
    <citation type="journal article" date="1993" name="Plant J.">
        <title>An inventory of 1152 expressed sequence tags obtained by partial sequencing of cDNAs from Arabidopsis thaliana.</title>
        <authorList>
            <person name="Hoefte H."/>
            <person name="Desprez T."/>
            <person name="Amselem J."/>
            <person name="Chiapello H."/>
            <person name="Rouze P."/>
            <person name="Caboche M."/>
            <person name="Moisan A."/>
            <person name="Jourjon M.-F."/>
            <person name="Charpenteau J.-L."/>
            <person name="Berthomieu P."/>
            <person name="Guerrier D."/>
            <person name="Giraudat J."/>
            <person name="Quigley F."/>
            <person name="Thomas F."/>
            <person name="Yu D.-Y."/>
            <person name="Mache R."/>
            <person name="Raynal M."/>
            <person name="Cooke R."/>
            <person name="Grellet F."/>
            <person name="Delseny M."/>
            <person name="Parmentier Y."/>
            <person name="de Marcillac G."/>
            <person name="Gigot C."/>
            <person name="Fleck J."/>
            <person name="Philipps G."/>
            <person name="Axelos M."/>
            <person name="Bardet C."/>
            <person name="Tremousaygue D."/>
            <person name="Lescure B."/>
        </authorList>
    </citation>
    <scope>NUCLEOTIDE SEQUENCE [LARGE SCALE MRNA]</scope>
    <source>
        <strain>cv. Columbia</strain>
    </source>
</reference>
<reference key="5">
    <citation type="submission" date="2002-03" db="EMBL/GenBank/DDBJ databases">
        <title>Full-length cDNA from Arabidopsis thaliana.</title>
        <authorList>
            <person name="Brover V.V."/>
            <person name="Troukhan M.E."/>
            <person name="Alexandrov N.A."/>
            <person name="Lu Y.-P."/>
            <person name="Flavell R.B."/>
            <person name="Feldmann K.A."/>
        </authorList>
    </citation>
    <scope>NUCLEOTIDE SEQUENCE [LARGE SCALE MRNA]</scope>
    <source>
        <strain>cv. Columbia</strain>
    </source>
</reference>
<dbReference type="EC" id="2.5.1.18"/>
<dbReference type="EMBL" id="AF288193">
    <property type="protein sequence ID" value="AAG30142.1"/>
    <property type="molecule type" value="mRNA"/>
</dbReference>
<dbReference type="EMBL" id="AC000348">
    <property type="protein sequence ID" value="AAF79859.1"/>
    <property type="status" value="ALT_SEQ"/>
    <property type="molecule type" value="Genomic_DNA"/>
</dbReference>
<dbReference type="EMBL" id="CP002684">
    <property type="protein sequence ID" value="AEE30784.1"/>
    <property type="molecule type" value="Genomic_DNA"/>
</dbReference>
<dbReference type="EMBL" id="AY044324">
    <property type="protein sequence ID" value="AAK73265.1"/>
    <property type="molecule type" value="mRNA"/>
</dbReference>
<dbReference type="EMBL" id="AY050343">
    <property type="protein sequence ID" value="AAK91360.1"/>
    <property type="molecule type" value="mRNA"/>
</dbReference>
<dbReference type="EMBL" id="AY094051">
    <property type="protein sequence ID" value="AAM16207.1"/>
    <property type="molecule type" value="mRNA"/>
</dbReference>
<dbReference type="EMBL" id="AY086946">
    <property type="protein sequence ID" value="AAM64510.1"/>
    <property type="molecule type" value="mRNA"/>
</dbReference>
<dbReference type="PIR" id="H86397">
    <property type="entry name" value="H86397"/>
</dbReference>
<dbReference type="RefSeq" id="NP_174033.1">
    <property type="nucleotide sequence ID" value="NM_102475.3"/>
</dbReference>
<dbReference type="SMR" id="Q9FUS6"/>
<dbReference type="FunCoup" id="Q9FUS6">
    <property type="interactions" value="229"/>
</dbReference>
<dbReference type="STRING" id="3702.Q9FUS6"/>
<dbReference type="iPTMnet" id="Q9FUS6"/>
<dbReference type="PaxDb" id="3702-AT1G27130.1"/>
<dbReference type="ProteomicsDB" id="230166"/>
<dbReference type="EnsemblPlants" id="AT1G27130.1">
    <property type="protein sequence ID" value="AT1G27130.1"/>
    <property type="gene ID" value="AT1G27130"/>
</dbReference>
<dbReference type="GeneID" id="839602"/>
<dbReference type="Gramene" id="AT1G27130.1">
    <property type="protein sequence ID" value="AT1G27130.1"/>
    <property type="gene ID" value="AT1G27130"/>
</dbReference>
<dbReference type="KEGG" id="ath:AT1G27130"/>
<dbReference type="Araport" id="AT1G27130"/>
<dbReference type="TAIR" id="AT1G27130">
    <property type="gene designation" value="GSTU13"/>
</dbReference>
<dbReference type="eggNOG" id="KOG0406">
    <property type="taxonomic scope" value="Eukaryota"/>
</dbReference>
<dbReference type="HOGENOM" id="CLU_011226_18_0_1"/>
<dbReference type="InParanoid" id="Q9FUS6"/>
<dbReference type="OMA" id="MECLAIL"/>
<dbReference type="PhylomeDB" id="Q9FUS6"/>
<dbReference type="BioCyc" id="ARA:AT1G27130-MONOMER"/>
<dbReference type="BioCyc" id="MetaCyc:AT1G27130-MONOMER"/>
<dbReference type="BRENDA" id="2.5.1.18">
    <property type="organism ID" value="399"/>
</dbReference>
<dbReference type="PRO" id="PR:Q9FUS6"/>
<dbReference type="Proteomes" id="UP000006548">
    <property type="component" value="Chromosome 1"/>
</dbReference>
<dbReference type="ExpressionAtlas" id="Q9FUS6">
    <property type="expression patterns" value="baseline and differential"/>
</dbReference>
<dbReference type="GO" id="GO:0005737">
    <property type="term" value="C:cytoplasm"/>
    <property type="evidence" value="ECO:0000303"/>
    <property type="project" value="TAIR"/>
</dbReference>
<dbReference type="GO" id="GO:0005829">
    <property type="term" value="C:cytosol"/>
    <property type="evidence" value="ECO:0007005"/>
    <property type="project" value="TAIR"/>
</dbReference>
<dbReference type="GO" id="GO:0005634">
    <property type="term" value="C:nucleus"/>
    <property type="evidence" value="ECO:0007005"/>
    <property type="project" value="TAIR"/>
</dbReference>
<dbReference type="GO" id="GO:0004364">
    <property type="term" value="F:glutathione transferase activity"/>
    <property type="evidence" value="ECO:0007669"/>
    <property type="project" value="UniProtKB-EC"/>
</dbReference>
<dbReference type="GO" id="GO:0052542">
    <property type="term" value="P:defense response by callose deposition"/>
    <property type="evidence" value="ECO:0000315"/>
    <property type="project" value="TAIR"/>
</dbReference>
<dbReference type="GO" id="GO:0050832">
    <property type="term" value="P:defense response to fungus"/>
    <property type="evidence" value="ECO:0000315"/>
    <property type="project" value="TAIR"/>
</dbReference>
<dbReference type="GO" id="GO:0006749">
    <property type="term" value="P:glutathione metabolic process"/>
    <property type="evidence" value="ECO:0007669"/>
    <property type="project" value="InterPro"/>
</dbReference>
<dbReference type="GO" id="GO:0042344">
    <property type="term" value="P:indole glucosinolate catabolic process"/>
    <property type="evidence" value="ECO:0000315"/>
    <property type="project" value="TAIR"/>
</dbReference>
<dbReference type="GO" id="GO:0045087">
    <property type="term" value="P:innate immune response"/>
    <property type="evidence" value="ECO:0000315"/>
    <property type="project" value="TAIR"/>
</dbReference>
<dbReference type="GO" id="GO:0009407">
    <property type="term" value="P:toxin catabolic process"/>
    <property type="evidence" value="ECO:0000304"/>
    <property type="project" value="TAIR"/>
</dbReference>
<dbReference type="CDD" id="cd03185">
    <property type="entry name" value="GST_C_Tau"/>
    <property type="match status" value="1"/>
</dbReference>
<dbReference type="CDD" id="cd03058">
    <property type="entry name" value="GST_N_Tau"/>
    <property type="match status" value="1"/>
</dbReference>
<dbReference type="FunFam" id="3.40.30.10:FF:000044">
    <property type="entry name" value="Glutathione S-transferase GSTU6"/>
    <property type="match status" value="1"/>
</dbReference>
<dbReference type="FunFam" id="1.20.1050.10:FF:000016">
    <property type="entry name" value="Glutathione S-transferase U9"/>
    <property type="match status" value="1"/>
</dbReference>
<dbReference type="Gene3D" id="1.20.1050.10">
    <property type="match status" value="1"/>
</dbReference>
<dbReference type="Gene3D" id="3.40.30.10">
    <property type="entry name" value="Glutaredoxin"/>
    <property type="match status" value="1"/>
</dbReference>
<dbReference type="InterPro" id="IPR010987">
    <property type="entry name" value="Glutathione-S-Trfase_C-like"/>
</dbReference>
<dbReference type="InterPro" id="IPR036282">
    <property type="entry name" value="Glutathione-S-Trfase_C_sf"/>
</dbReference>
<dbReference type="InterPro" id="IPR004045">
    <property type="entry name" value="Glutathione_S-Trfase_N"/>
</dbReference>
<dbReference type="InterPro" id="IPR045074">
    <property type="entry name" value="GST_C_Tau"/>
</dbReference>
<dbReference type="InterPro" id="IPR045073">
    <property type="entry name" value="Omega/Tau-like"/>
</dbReference>
<dbReference type="InterPro" id="IPR036249">
    <property type="entry name" value="Thioredoxin-like_sf"/>
</dbReference>
<dbReference type="PANTHER" id="PTHR11260:SF632">
    <property type="entry name" value="GLUTATHIONE S-TRANSFERASE U13-RELATED"/>
    <property type="match status" value="1"/>
</dbReference>
<dbReference type="PANTHER" id="PTHR11260">
    <property type="entry name" value="GLUTATHIONE S-TRANSFERASE, GST, SUPERFAMILY, GST DOMAIN CONTAINING"/>
    <property type="match status" value="1"/>
</dbReference>
<dbReference type="Pfam" id="PF02798">
    <property type="entry name" value="GST_N"/>
    <property type="match status" value="1"/>
</dbReference>
<dbReference type="SFLD" id="SFLDG01152">
    <property type="entry name" value="Main.3:_Omega-_and_Tau-like"/>
    <property type="match status" value="1"/>
</dbReference>
<dbReference type="SFLD" id="SFLDG00358">
    <property type="entry name" value="Main_(cytGST)"/>
    <property type="match status" value="1"/>
</dbReference>
<dbReference type="SUPFAM" id="SSF47616">
    <property type="entry name" value="GST C-terminal domain-like"/>
    <property type="match status" value="1"/>
</dbReference>
<dbReference type="SUPFAM" id="SSF52833">
    <property type="entry name" value="Thioredoxin-like"/>
    <property type="match status" value="1"/>
</dbReference>
<dbReference type="PROSITE" id="PS50405">
    <property type="entry name" value="GST_CTER"/>
    <property type="match status" value="1"/>
</dbReference>
<dbReference type="PROSITE" id="PS50404">
    <property type="entry name" value="GST_NTER"/>
    <property type="match status" value="1"/>
</dbReference>
<gene>
    <name type="primary">GSTU13</name>
    <name type="synonym">GST12</name>
    <name type="ordered locus">At1g27130</name>
    <name type="ORF">T7N9.190</name>
</gene>
<sequence length="227" mass="25131">MAQNDTVKLIGSWSSPYSLRARVALHLKSVKYEYLDEPDVLKEKSELLLKSNPIHKKVPVLLHGDLSISESLNVVQYVDEAWPSVPSILPSDAYDRASARFWAQYIDDKCFAAVDAVVGAKDDEGKMAAVGKLMECLAILEETFQKSSKGLGFFGGETIGYLDIACSALLGPISVIEAFSGVKFLRQETTPGLIKWAERFRAHEAVKPYMPTVEEVVAFAKQKFNVQ</sequence>
<comment type="function">
    <text evidence="3">In vitro, possesses glutathione S-transferase activity toward 1-chloro-2,4-dinitrobenzene (CDNB) and benzyl isothiocyanate (BITC). May be involved in the conjugation of reduced glutathione to a wide number of exogenous and endogenous hydrophobic electrophiles and have a detoxification role against certain herbicides.</text>
</comment>
<comment type="catalytic activity">
    <reaction>
        <text>RX + glutathione = an S-substituted glutathione + a halide anion + H(+)</text>
        <dbReference type="Rhea" id="RHEA:16437"/>
        <dbReference type="ChEBI" id="CHEBI:15378"/>
        <dbReference type="ChEBI" id="CHEBI:16042"/>
        <dbReference type="ChEBI" id="CHEBI:17792"/>
        <dbReference type="ChEBI" id="CHEBI:57925"/>
        <dbReference type="ChEBI" id="CHEBI:90779"/>
        <dbReference type="EC" id="2.5.1.18"/>
    </reaction>
</comment>
<comment type="subcellular location">
    <subcellularLocation>
        <location evidence="4">Cytoplasm</location>
        <location evidence="4">Cytosol</location>
    </subcellularLocation>
</comment>
<comment type="induction">
    <text evidence="3">By Hyaloperonospora parasitica. Down-regulated by salicylic acid, ethylene and methyl jasmonate.</text>
</comment>
<comment type="similarity">
    <text evidence="4">Belongs to the GST superfamily. Tau family.</text>
</comment>
<comment type="sequence caution" evidence="4">
    <conflict type="erroneous gene model prediction">
        <sequence resource="EMBL-CDS" id="AAF79859"/>
    </conflict>
    <text>The predicted gene At1g27130 has been split into 2 genes: At1g27130 and At1g27140.</text>
</comment>
<keyword id="KW-0963">Cytoplasm</keyword>
<keyword id="KW-0216">Detoxification</keyword>
<keyword id="KW-0597">Phosphoprotein</keyword>
<keyword id="KW-1185">Reference proteome</keyword>
<keyword id="KW-0346">Stress response</keyword>
<keyword id="KW-0808">Transferase</keyword>
<name>GSTUD_ARATH</name>